<protein>
    <recommendedName>
        <fullName evidence="1">RNA pyrophosphohydrolase</fullName>
        <ecNumber evidence="1">3.6.1.-</ecNumber>
    </recommendedName>
    <alternativeName>
        <fullName evidence="1">(Di)nucleoside polyphosphate hydrolase</fullName>
    </alternativeName>
</protein>
<sequence>MVIDRAGYRLNVGIILVNDSDRVFWGRRSGHDAWQFPQGGLAPGETAMQAMYRELHEEVGLDKGDVEILGSTRRWLKYRLPKQYLRHGSEPLVIGQKQKWYLLKLVTSEQKVRLDLSDSPEFDSWRWVDFHEPEQQVIFFKRQVYIQALKELEPLLKKERRTPYGLKRKRGNQRA</sequence>
<keyword id="KW-0378">Hydrolase</keyword>
<organism>
    <name type="scientific">Legionella pneumophila (strain Corby)</name>
    <dbReference type="NCBI Taxonomy" id="400673"/>
    <lineage>
        <taxon>Bacteria</taxon>
        <taxon>Pseudomonadati</taxon>
        <taxon>Pseudomonadota</taxon>
        <taxon>Gammaproteobacteria</taxon>
        <taxon>Legionellales</taxon>
        <taxon>Legionellaceae</taxon>
        <taxon>Legionella</taxon>
    </lineage>
</organism>
<proteinExistence type="inferred from homology"/>
<feature type="chain" id="PRO_1000021959" description="RNA pyrophosphohydrolase">
    <location>
        <begin position="1"/>
        <end position="175"/>
    </location>
</feature>
<feature type="domain" description="Nudix hydrolase" evidence="1">
    <location>
        <begin position="7"/>
        <end position="150"/>
    </location>
</feature>
<feature type="short sequence motif" description="Nudix box">
    <location>
        <begin position="39"/>
        <end position="60"/>
    </location>
</feature>
<dbReference type="EC" id="3.6.1.-" evidence="1"/>
<dbReference type="EMBL" id="CP000675">
    <property type="protein sequence ID" value="ABQ57045.1"/>
    <property type="molecule type" value="Genomic_DNA"/>
</dbReference>
<dbReference type="RefSeq" id="WP_010948558.1">
    <property type="nucleotide sequence ID" value="NZ_JAPMSS010000004.1"/>
</dbReference>
<dbReference type="SMR" id="A5II45"/>
<dbReference type="KEGG" id="lpc:LPC_3158"/>
<dbReference type="HOGENOM" id="CLU_087195_3_1_6"/>
<dbReference type="GO" id="GO:0016462">
    <property type="term" value="F:pyrophosphatase activity"/>
    <property type="evidence" value="ECO:0007669"/>
    <property type="project" value="UniProtKB-ARBA"/>
</dbReference>
<dbReference type="CDD" id="cd03671">
    <property type="entry name" value="NUDIX_Ap4A_hydrolase_plant_like"/>
    <property type="match status" value="1"/>
</dbReference>
<dbReference type="Gene3D" id="3.90.79.10">
    <property type="entry name" value="Nucleoside Triphosphate Pyrophosphohydrolase"/>
    <property type="match status" value="1"/>
</dbReference>
<dbReference type="HAMAP" id="MF_00298">
    <property type="entry name" value="Nudix_RppH"/>
    <property type="match status" value="1"/>
</dbReference>
<dbReference type="InterPro" id="IPR020476">
    <property type="entry name" value="Nudix_hydrolase"/>
</dbReference>
<dbReference type="InterPro" id="IPR015797">
    <property type="entry name" value="NUDIX_hydrolase-like_dom_sf"/>
</dbReference>
<dbReference type="InterPro" id="IPR020084">
    <property type="entry name" value="NUDIX_hydrolase_CS"/>
</dbReference>
<dbReference type="InterPro" id="IPR000086">
    <property type="entry name" value="NUDIX_hydrolase_dom"/>
</dbReference>
<dbReference type="InterPro" id="IPR022927">
    <property type="entry name" value="RppH"/>
</dbReference>
<dbReference type="NCBIfam" id="NF001937">
    <property type="entry name" value="PRK00714.1-4"/>
    <property type="match status" value="1"/>
</dbReference>
<dbReference type="NCBIfam" id="NF001938">
    <property type="entry name" value="PRK00714.1-5"/>
    <property type="match status" value="1"/>
</dbReference>
<dbReference type="PANTHER" id="PTHR43046">
    <property type="entry name" value="GDP-MANNOSE MANNOSYL HYDROLASE"/>
    <property type="match status" value="1"/>
</dbReference>
<dbReference type="PANTHER" id="PTHR43046:SF14">
    <property type="entry name" value="MUTT_NUDIX FAMILY PROTEIN"/>
    <property type="match status" value="1"/>
</dbReference>
<dbReference type="Pfam" id="PF00293">
    <property type="entry name" value="NUDIX"/>
    <property type="match status" value="1"/>
</dbReference>
<dbReference type="PRINTS" id="PR00502">
    <property type="entry name" value="NUDIXFAMILY"/>
</dbReference>
<dbReference type="SUPFAM" id="SSF55811">
    <property type="entry name" value="Nudix"/>
    <property type="match status" value="1"/>
</dbReference>
<dbReference type="PROSITE" id="PS51462">
    <property type="entry name" value="NUDIX"/>
    <property type="match status" value="1"/>
</dbReference>
<dbReference type="PROSITE" id="PS00893">
    <property type="entry name" value="NUDIX_BOX"/>
    <property type="match status" value="1"/>
</dbReference>
<reference key="1">
    <citation type="submission" date="2006-11" db="EMBL/GenBank/DDBJ databases">
        <title>Identification and characterization of a new conjugation/ type IVA secretion system (trb/tra) of L. pneumophila Corby localized on a mobile genomic island.</title>
        <authorList>
            <person name="Gloeckner G."/>
            <person name="Albert-Weissenberger C."/>
            <person name="Weinmann E."/>
            <person name="Jacobi S."/>
            <person name="Schunder E."/>
            <person name="Steinert M."/>
            <person name="Buchrieser C."/>
            <person name="Hacker J."/>
            <person name="Heuner K."/>
        </authorList>
    </citation>
    <scope>NUCLEOTIDE SEQUENCE [LARGE SCALE GENOMIC DNA]</scope>
    <source>
        <strain>Corby</strain>
    </source>
</reference>
<name>RPPH_LEGPC</name>
<gene>
    <name evidence="1" type="primary">rppH</name>
    <name evidence="1" type="synonym">nudH</name>
    <name type="ordered locus">LPC_3158</name>
</gene>
<evidence type="ECO:0000255" key="1">
    <source>
        <dbReference type="HAMAP-Rule" id="MF_00298"/>
    </source>
</evidence>
<accession>A5II45</accession>
<comment type="function">
    <text evidence="1">Accelerates the degradation of transcripts by removing pyrophosphate from the 5'-end of triphosphorylated RNA, leading to a more labile monophosphorylated state that can stimulate subsequent ribonuclease cleavage.</text>
</comment>
<comment type="cofactor">
    <cofactor evidence="1">
        <name>a divalent metal cation</name>
        <dbReference type="ChEBI" id="CHEBI:60240"/>
    </cofactor>
</comment>
<comment type="similarity">
    <text evidence="1">Belongs to the Nudix hydrolase family. RppH subfamily.</text>
</comment>